<accession>A6T533</accession>
<protein>
    <recommendedName>
        <fullName evidence="1">Esterase FrsA</fullName>
        <ecNumber evidence="1">3.1.1.1</ecNumber>
    </recommendedName>
</protein>
<comment type="function">
    <text evidence="1">Catalyzes the hydrolysis of esters.</text>
</comment>
<comment type="catalytic activity">
    <reaction evidence="1">
        <text>a carboxylic ester + H2O = an alcohol + a carboxylate + H(+)</text>
        <dbReference type="Rhea" id="RHEA:21164"/>
        <dbReference type="ChEBI" id="CHEBI:15377"/>
        <dbReference type="ChEBI" id="CHEBI:15378"/>
        <dbReference type="ChEBI" id="CHEBI:29067"/>
        <dbReference type="ChEBI" id="CHEBI:30879"/>
        <dbReference type="ChEBI" id="CHEBI:33308"/>
        <dbReference type="EC" id="3.1.1.1"/>
    </reaction>
</comment>
<comment type="similarity">
    <text evidence="1">Belongs to the FrsA family.</text>
</comment>
<name>FRSA_KLEP7</name>
<dbReference type="EC" id="3.1.1.1" evidence="1"/>
<dbReference type="EMBL" id="CP000647">
    <property type="protein sequence ID" value="ABR75704.1"/>
    <property type="molecule type" value="Genomic_DNA"/>
</dbReference>
<dbReference type="RefSeq" id="WP_002889742.1">
    <property type="nucleotide sequence ID" value="NC_009648.1"/>
</dbReference>
<dbReference type="SMR" id="A6T533"/>
<dbReference type="STRING" id="272620.KPN_00251"/>
<dbReference type="ESTHER" id="klep7-y243">
    <property type="family name" value="Duf_1100-R"/>
</dbReference>
<dbReference type="jPOST" id="A6T533"/>
<dbReference type="PaxDb" id="272620-KPN_00251"/>
<dbReference type="EnsemblBacteria" id="ABR75704">
    <property type="protein sequence ID" value="ABR75704"/>
    <property type="gene ID" value="KPN_00251"/>
</dbReference>
<dbReference type="KEGG" id="kpn:KPN_00251"/>
<dbReference type="HOGENOM" id="CLU_036819_0_0_6"/>
<dbReference type="Proteomes" id="UP000000265">
    <property type="component" value="Chromosome"/>
</dbReference>
<dbReference type="GO" id="GO:0106435">
    <property type="term" value="F:carboxylesterase activity"/>
    <property type="evidence" value="ECO:0007669"/>
    <property type="project" value="UniProtKB-EC"/>
</dbReference>
<dbReference type="FunFam" id="3.40.50.1820:FF:000022">
    <property type="entry name" value="Esterase FrsA"/>
    <property type="match status" value="1"/>
</dbReference>
<dbReference type="Gene3D" id="3.40.50.1820">
    <property type="entry name" value="alpha/beta hydrolase"/>
    <property type="match status" value="1"/>
</dbReference>
<dbReference type="HAMAP" id="MF_01063">
    <property type="entry name" value="FrsA"/>
    <property type="match status" value="1"/>
</dbReference>
<dbReference type="InterPro" id="IPR029058">
    <property type="entry name" value="AB_hydrolase_fold"/>
</dbReference>
<dbReference type="InterPro" id="IPR043423">
    <property type="entry name" value="FrsA"/>
</dbReference>
<dbReference type="InterPro" id="IPR010520">
    <property type="entry name" value="FrsA-like"/>
</dbReference>
<dbReference type="InterPro" id="IPR050261">
    <property type="entry name" value="FrsA_esterase"/>
</dbReference>
<dbReference type="NCBIfam" id="NF003460">
    <property type="entry name" value="PRK05077.1"/>
    <property type="match status" value="1"/>
</dbReference>
<dbReference type="PANTHER" id="PTHR22946">
    <property type="entry name" value="DIENELACTONE HYDROLASE DOMAIN-CONTAINING PROTEIN-RELATED"/>
    <property type="match status" value="1"/>
</dbReference>
<dbReference type="PANTHER" id="PTHR22946:SF4">
    <property type="entry name" value="ESTERASE FRSA"/>
    <property type="match status" value="1"/>
</dbReference>
<dbReference type="Pfam" id="PF06500">
    <property type="entry name" value="FrsA-like"/>
    <property type="match status" value="1"/>
</dbReference>
<dbReference type="SUPFAM" id="SSF53474">
    <property type="entry name" value="alpha/beta-Hydrolases"/>
    <property type="match status" value="1"/>
</dbReference>
<organism>
    <name type="scientific">Klebsiella pneumoniae subsp. pneumoniae (strain ATCC 700721 / MGH 78578)</name>
    <dbReference type="NCBI Taxonomy" id="272620"/>
    <lineage>
        <taxon>Bacteria</taxon>
        <taxon>Pseudomonadati</taxon>
        <taxon>Pseudomonadota</taxon>
        <taxon>Gammaproteobacteria</taxon>
        <taxon>Enterobacterales</taxon>
        <taxon>Enterobacteriaceae</taxon>
        <taxon>Klebsiella/Raoultella group</taxon>
        <taxon>Klebsiella</taxon>
        <taxon>Klebsiella pneumoniae complex</taxon>
    </lineage>
</organism>
<reference key="1">
    <citation type="submission" date="2006-09" db="EMBL/GenBank/DDBJ databases">
        <authorList>
            <consortium name="The Klebsiella pneumonia Genome Sequencing Project"/>
            <person name="McClelland M."/>
            <person name="Sanderson E.K."/>
            <person name="Spieth J."/>
            <person name="Clifton W.S."/>
            <person name="Latreille P."/>
            <person name="Sabo A."/>
            <person name="Pepin K."/>
            <person name="Bhonagiri V."/>
            <person name="Porwollik S."/>
            <person name="Ali J."/>
            <person name="Wilson R.K."/>
        </authorList>
    </citation>
    <scope>NUCLEOTIDE SEQUENCE [LARGE SCALE GENOMIC DNA]</scope>
    <source>
        <strain>ATCC 700721 / MGH 78578</strain>
    </source>
</reference>
<gene>
    <name evidence="1" type="primary">frsA</name>
    <name type="ordered locus">KPN78578_02430</name>
    <name type="ORF">KPN_00251</name>
</gene>
<proteinExistence type="inferred from homology"/>
<keyword id="KW-0378">Hydrolase</keyword>
<keyword id="KW-0719">Serine esterase</keyword>
<sequence>MSQANLSETLFKPRFKHPETSTLVRRFSAGKPQAMQSALSGNHVDHWYRLINRLMWIWRGVTPQEILDVQARIVMSEAERTDPELFDTVIGYRGGNWIFEWAKEAMQWQQKAGQEADPLLSGRHWLHASNLYSIAAYPHIKGDELAEQAQALANRAYEEAAQRLPGSLRELEFTIPGGSPITGFLHMPKGEGPFPTVLMCGGLDSLQTDYYNLYENYFSPLGIAMLTIDMPSIGFSSKWTLNQDTSLLHQHALRHLENVPWIDHTRVAAFGFRFGANIAVRLGYLEPQRLKAVACLGPVVHGLLVDPLHQGRVPEMYLDVLASRLGMHDASDEALRVELNRYSLKTQGLLGRRCPTPMLSGFWKDDPFSPEEESRLITSSSADGKLLEIPFNPVYRNFDHALRQIARWINHRFG</sequence>
<feature type="chain" id="PRO_1000064484" description="Esterase FrsA">
    <location>
        <begin position="1"/>
        <end position="414"/>
    </location>
</feature>
<evidence type="ECO:0000255" key="1">
    <source>
        <dbReference type="HAMAP-Rule" id="MF_01063"/>
    </source>
</evidence>